<proteinExistence type="inferred from homology"/>
<keyword id="KW-0456">Lyase</keyword>
<keyword id="KW-0533">Nickel</keyword>
<accession>Q8CTP4</accession>
<gene>
    <name evidence="1" type="primary">larC</name>
    <name type="ordered locus">SE_0371</name>
</gene>
<evidence type="ECO:0000255" key="1">
    <source>
        <dbReference type="HAMAP-Rule" id="MF_01074"/>
    </source>
</evidence>
<name>LARC_STAES</name>
<comment type="function">
    <text evidence="1">Involved in the biosynthesis of a nickel-pincer cofactor ((SCS)Ni(II) pincer complex). Binds Ni(2+), and functions in nickel delivery to pyridinium-3,5-bisthiocarboxylic acid mononucleotide (P2TMN), to form the mature cofactor. Is thus probably required for the activation of nickel-pincer cofactor-dependent enzymes.</text>
</comment>
<comment type="catalytic activity">
    <reaction evidence="1">
        <text>Ni(II)-pyridinium-3,5-bisthiocarboxylate mononucleotide = pyridinium-3,5-bisthiocarboxylate mononucleotide + Ni(2+)</text>
        <dbReference type="Rhea" id="RHEA:54784"/>
        <dbReference type="ChEBI" id="CHEBI:49786"/>
        <dbReference type="ChEBI" id="CHEBI:137372"/>
        <dbReference type="ChEBI" id="CHEBI:137373"/>
        <dbReference type="EC" id="4.99.1.12"/>
    </reaction>
</comment>
<comment type="similarity">
    <text evidence="1">Belongs to the LarC family.</text>
</comment>
<feature type="chain" id="PRO_0000146851" description="Pyridinium-3,5-bisthiocarboxylic acid mononucleotide nickel insertion protein">
    <location>
        <begin position="1"/>
        <end position="395"/>
    </location>
</feature>
<sequence length="395" mass="44129">MTKALYLDCHAGIAGDMLLSALVDLGANPEDIESELKKLPLDQFKLHFQKRVKQGIHAMTLNIDVKEANHHRHVNDIFKMIDDSTLPERVKYRSKKIFEIIGQAEAKIHGMSFEEVHFHEVGAMDSIIDIIGGCIALEQLGINTLYCSAIPTGHGKINIAHGIYPIPAPATAEILKGIPIAHFDVQSELTTPTGAAFAKGLVSSFGPFPSATIQHIGYGAGSKDFDFPNILRVIQFESEFEQQDSVQVIECQIDDMTPEALGYFMNNALEQGALDAYYTPIFMKKSRPSTQLTLICKLHDKTYFEQLILQETSSLGVRSTSVNRKTLNRAFKILSTQHGTVSIKFGLQNGKIMKMKPEYEDLKKIAKTTKQPFQVIHNEVLQQLYQTYHIGNILQ</sequence>
<organism>
    <name type="scientific">Staphylococcus epidermidis (strain ATCC 12228 / FDA PCI 1200)</name>
    <dbReference type="NCBI Taxonomy" id="176280"/>
    <lineage>
        <taxon>Bacteria</taxon>
        <taxon>Bacillati</taxon>
        <taxon>Bacillota</taxon>
        <taxon>Bacilli</taxon>
        <taxon>Bacillales</taxon>
        <taxon>Staphylococcaceae</taxon>
        <taxon>Staphylococcus</taxon>
    </lineage>
</organism>
<protein>
    <recommendedName>
        <fullName evidence="1">Pyridinium-3,5-bisthiocarboxylic acid mononucleotide nickel insertion protein</fullName>
        <shortName evidence="1">P2TMN nickel insertion protein</shortName>
        <ecNumber evidence="1">4.99.1.12</ecNumber>
    </recommendedName>
    <alternativeName>
        <fullName evidence="1">Nickel-pincer cofactor biosynthesis protein LarC</fullName>
    </alternativeName>
</protein>
<dbReference type="EC" id="4.99.1.12" evidence="1"/>
<dbReference type="EMBL" id="AE015929">
    <property type="protein sequence ID" value="AAO03968.1"/>
    <property type="molecule type" value="Genomic_DNA"/>
</dbReference>
<dbReference type="RefSeq" id="NP_763926.1">
    <property type="nucleotide sequence ID" value="NC_004461.1"/>
</dbReference>
<dbReference type="RefSeq" id="WP_002438754.1">
    <property type="nucleotide sequence ID" value="NZ_WBME01000026.1"/>
</dbReference>
<dbReference type="SMR" id="Q8CTP4"/>
<dbReference type="GeneID" id="50019467"/>
<dbReference type="KEGG" id="sep:SE_0371"/>
<dbReference type="PATRIC" id="fig|176280.10.peg.346"/>
<dbReference type="eggNOG" id="COG1641">
    <property type="taxonomic scope" value="Bacteria"/>
</dbReference>
<dbReference type="HOGENOM" id="CLU_028523_2_1_9"/>
<dbReference type="OrthoDB" id="9765625at2"/>
<dbReference type="Proteomes" id="UP000001411">
    <property type="component" value="Chromosome"/>
</dbReference>
<dbReference type="GO" id="GO:0016829">
    <property type="term" value="F:lyase activity"/>
    <property type="evidence" value="ECO:0007669"/>
    <property type="project" value="UniProtKB-UniRule"/>
</dbReference>
<dbReference type="GO" id="GO:0016151">
    <property type="term" value="F:nickel cation binding"/>
    <property type="evidence" value="ECO:0007669"/>
    <property type="project" value="UniProtKB-UniRule"/>
</dbReference>
<dbReference type="GO" id="GO:0051604">
    <property type="term" value="P:protein maturation"/>
    <property type="evidence" value="ECO:0007669"/>
    <property type="project" value="UniProtKB-UniRule"/>
</dbReference>
<dbReference type="Gene3D" id="3.10.20.300">
    <property type="entry name" value="mk0293 like domain"/>
    <property type="match status" value="1"/>
</dbReference>
<dbReference type="Gene3D" id="3.30.70.1380">
    <property type="entry name" value="Transcriptional regulatory protein pf0864 domain like"/>
    <property type="match status" value="1"/>
</dbReference>
<dbReference type="HAMAP" id="MF_01074">
    <property type="entry name" value="LarC"/>
    <property type="match status" value="1"/>
</dbReference>
<dbReference type="InterPro" id="IPR002822">
    <property type="entry name" value="Ni_insertion"/>
</dbReference>
<dbReference type="NCBIfam" id="TIGR00299">
    <property type="entry name" value="nickel pincer cofactor biosynthesis protein LarC"/>
    <property type="match status" value="1"/>
</dbReference>
<dbReference type="PANTHER" id="PTHR36566">
    <property type="entry name" value="NICKEL INSERTION PROTEIN-RELATED"/>
    <property type="match status" value="1"/>
</dbReference>
<dbReference type="PANTHER" id="PTHR36566:SF1">
    <property type="entry name" value="PYRIDINIUM-3,5-BISTHIOCARBOXYLIC ACID MONONUCLEOTIDE NICKEL INSERTION PROTEIN"/>
    <property type="match status" value="1"/>
</dbReference>
<dbReference type="Pfam" id="PF01969">
    <property type="entry name" value="Ni_insertion"/>
    <property type="match status" value="1"/>
</dbReference>
<reference key="1">
    <citation type="journal article" date="2003" name="Mol. Microbiol.">
        <title>Genome-based analysis of virulence genes in a non-biofilm-forming Staphylococcus epidermidis strain (ATCC 12228).</title>
        <authorList>
            <person name="Zhang Y.-Q."/>
            <person name="Ren S.-X."/>
            <person name="Li H.-L."/>
            <person name="Wang Y.-X."/>
            <person name="Fu G."/>
            <person name="Yang J."/>
            <person name="Qin Z.-Q."/>
            <person name="Miao Y.-G."/>
            <person name="Wang W.-Y."/>
            <person name="Chen R.-S."/>
            <person name="Shen Y."/>
            <person name="Chen Z."/>
            <person name="Yuan Z.-H."/>
            <person name="Zhao G.-P."/>
            <person name="Qu D."/>
            <person name="Danchin A."/>
            <person name="Wen Y.-M."/>
        </authorList>
    </citation>
    <scope>NUCLEOTIDE SEQUENCE [LARGE SCALE GENOMIC DNA]</scope>
    <source>
        <strain>ATCC 12228 / FDA PCI 1200</strain>
    </source>
</reference>